<reference key="1">
    <citation type="journal article" date="2002" name="Nature">
        <title>The genome sequence of Schizosaccharomyces pombe.</title>
        <authorList>
            <person name="Wood V."/>
            <person name="Gwilliam R."/>
            <person name="Rajandream M.A."/>
            <person name="Lyne M.H."/>
            <person name="Lyne R."/>
            <person name="Stewart A."/>
            <person name="Sgouros J.G."/>
            <person name="Peat N."/>
            <person name="Hayles J."/>
            <person name="Baker S.G."/>
            <person name="Basham D."/>
            <person name="Bowman S."/>
            <person name="Brooks K."/>
            <person name="Brown D."/>
            <person name="Brown S."/>
            <person name="Chillingworth T."/>
            <person name="Churcher C.M."/>
            <person name="Collins M."/>
            <person name="Connor R."/>
            <person name="Cronin A."/>
            <person name="Davis P."/>
            <person name="Feltwell T."/>
            <person name="Fraser A."/>
            <person name="Gentles S."/>
            <person name="Goble A."/>
            <person name="Hamlin N."/>
            <person name="Harris D.E."/>
            <person name="Hidalgo J."/>
            <person name="Hodgson G."/>
            <person name="Holroyd S."/>
            <person name="Hornsby T."/>
            <person name="Howarth S."/>
            <person name="Huckle E.J."/>
            <person name="Hunt S."/>
            <person name="Jagels K."/>
            <person name="James K.D."/>
            <person name="Jones L."/>
            <person name="Jones M."/>
            <person name="Leather S."/>
            <person name="McDonald S."/>
            <person name="McLean J."/>
            <person name="Mooney P."/>
            <person name="Moule S."/>
            <person name="Mungall K.L."/>
            <person name="Murphy L.D."/>
            <person name="Niblett D."/>
            <person name="Odell C."/>
            <person name="Oliver K."/>
            <person name="O'Neil S."/>
            <person name="Pearson D."/>
            <person name="Quail M.A."/>
            <person name="Rabbinowitsch E."/>
            <person name="Rutherford K.M."/>
            <person name="Rutter S."/>
            <person name="Saunders D."/>
            <person name="Seeger K."/>
            <person name="Sharp S."/>
            <person name="Skelton J."/>
            <person name="Simmonds M.N."/>
            <person name="Squares R."/>
            <person name="Squares S."/>
            <person name="Stevens K."/>
            <person name="Taylor K."/>
            <person name="Taylor R.G."/>
            <person name="Tivey A."/>
            <person name="Walsh S.V."/>
            <person name="Warren T."/>
            <person name="Whitehead S."/>
            <person name="Woodward J.R."/>
            <person name="Volckaert G."/>
            <person name="Aert R."/>
            <person name="Robben J."/>
            <person name="Grymonprez B."/>
            <person name="Weltjens I."/>
            <person name="Vanstreels E."/>
            <person name="Rieger M."/>
            <person name="Schaefer M."/>
            <person name="Mueller-Auer S."/>
            <person name="Gabel C."/>
            <person name="Fuchs M."/>
            <person name="Duesterhoeft A."/>
            <person name="Fritzc C."/>
            <person name="Holzer E."/>
            <person name="Moestl D."/>
            <person name="Hilbert H."/>
            <person name="Borzym K."/>
            <person name="Langer I."/>
            <person name="Beck A."/>
            <person name="Lehrach H."/>
            <person name="Reinhardt R."/>
            <person name="Pohl T.M."/>
            <person name="Eger P."/>
            <person name="Zimmermann W."/>
            <person name="Wedler H."/>
            <person name="Wambutt R."/>
            <person name="Purnelle B."/>
            <person name="Goffeau A."/>
            <person name="Cadieu E."/>
            <person name="Dreano S."/>
            <person name="Gloux S."/>
            <person name="Lelaure V."/>
            <person name="Mottier S."/>
            <person name="Galibert F."/>
            <person name="Aves S.J."/>
            <person name="Xiang Z."/>
            <person name="Hunt C."/>
            <person name="Moore K."/>
            <person name="Hurst S.M."/>
            <person name="Lucas M."/>
            <person name="Rochet M."/>
            <person name="Gaillardin C."/>
            <person name="Tallada V.A."/>
            <person name="Garzon A."/>
            <person name="Thode G."/>
            <person name="Daga R.R."/>
            <person name="Cruzado L."/>
            <person name="Jimenez J."/>
            <person name="Sanchez M."/>
            <person name="del Rey F."/>
            <person name="Benito J."/>
            <person name="Dominguez A."/>
            <person name="Revuelta J.L."/>
            <person name="Moreno S."/>
            <person name="Armstrong J."/>
            <person name="Forsburg S.L."/>
            <person name="Cerutti L."/>
            <person name="Lowe T."/>
            <person name="McCombie W.R."/>
            <person name="Paulsen I."/>
            <person name="Potashkin J."/>
            <person name="Shpakovski G.V."/>
            <person name="Ussery D."/>
            <person name="Barrell B.G."/>
            <person name="Nurse P."/>
        </authorList>
    </citation>
    <scope>NUCLEOTIDE SEQUENCE [LARGE SCALE GENOMIC DNA]</scope>
    <source>
        <strain>972 / ATCC 24843</strain>
    </source>
</reference>
<reference key="2">
    <citation type="journal article" date="2011" name="Science">
        <title>Comparative functional genomics of the fission yeasts.</title>
        <authorList>
            <person name="Rhind N."/>
            <person name="Chen Z."/>
            <person name="Yassour M."/>
            <person name="Thompson D.A."/>
            <person name="Haas B.J."/>
            <person name="Habib N."/>
            <person name="Wapinski I."/>
            <person name="Roy S."/>
            <person name="Lin M.F."/>
            <person name="Heiman D.I."/>
            <person name="Young S.K."/>
            <person name="Furuya K."/>
            <person name="Guo Y."/>
            <person name="Pidoux A."/>
            <person name="Chen H.M."/>
            <person name="Robbertse B."/>
            <person name="Goldberg J.M."/>
            <person name="Aoki K."/>
            <person name="Bayne E.H."/>
            <person name="Berlin A.M."/>
            <person name="Desjardins C.A."/>
            <person name="Dobbs E."/>
            <person name="Dukaj L."/>
            <person name="Fan L."/>
            <person name="FitzGerald M.G."/>
            <person name="French C."/>
            <person name="Gujja S."/>
            <person name="Hansen K."/>
            <person name="Keifenheim D."/>
            <person name="Levin J.Z."/>
            <person name="Mosher R.A."/>
            <person name="Mueller C.A."/>
            <person name="Pfiffner J."/>
            <person name="Priest M."/>
            <person name="Russ C."/>
            <person name="Smialowska A."/>
            <person name="Swoboda P."/>
            <person name="Sykes S.M."/>
            <person name="Vaughn M."/>
            <person name="Vengrova S."/>
            <person name="Yoder R."/>
            <person name="Zeng Q."/>
            <person name="Allshire R."/>
            <person name="Baulcombe D."/>
            <person name="Birren B.W."/>
            <person name="Brown W."/>
            <person name="Ekwall K."/>
            <person name="Kellis M."/>
            <person name="Leatherwood J."/>
            <person name="Levin H."/>
            <person name="Margalit H."/>
            <person name="Martienssen R."/>
            <person name="Nieduszynski C.A."/>
            <person name="Spatafora J.W."/>
            <person name="Friedman N."/>
            <person name="Dalgaard J.Z."/>
            <person name="Baumann P."/>
            <person name="Niki H."/>
            <person name="Regev A."/>
            <person name="Nusbaum C."/>
        </authorList>
    </citation>
    <scope>REVISION OF GENE MODEL</scope>
</reference>
<reference key="3">
    <citation type="journal article" date="2006" name="Nat. Biotechnol.">
        <title>ORFeome cloning and global analysis of protein localization in the fission yeast Schizosaccharomyces pombe.</title>
        <authorList>
            <person name="Matsuyama A."/>
            <person name="Arai R."/>
            <person name="Yashiroda Y."/>
            <person name="Shirai A."/>
            <person name="Kamata A."/>
            <person name="Sekido S."/>
            <person name="Kobayashi Y."/>
            <person name="Hashimoto A."/>
            <person name="Hamamoto M."/>
            <person name="Hiraoka Y."/>
            <person name="Horinouchi S."/>
            <person name="Yoshida M."/>
        </authorList>
    </citation>
    <scope>SUBCELLULAR LOCATION [LARGE SCALE ANALYSIS]</scope>
</reference>
<reference key="4">
    <citation type="journal article" date="2020" name="J. Cell Sci.">
        <title>Fission yeast Opy1 is an endogenous PI(4,5)P2 sensor that binds to the phosphatidylinositol 4-phosphate 5-kinase Its3.</title>
        <authorList>
            <person name="Snider C.E."/>
            <person name="Willet A.H."/>
            <person name="Brown H.T."/>
            <person name="Chen J.S."/>
            <person name="Evers J.M."/>
            <person name="Gould K.L."/>
        </authorList>
    </citation>
    <scope>INTERACTION WITH ITS3</scope>
    <scope>SUBCELLULAR LOCATION</scope>
    <scope>DOMAIN PH 1</scope>
    <scope>DISRUPTION PHENOTYPE</scope>
    <scope>MUTAGENESIS OF 34-LYS--LYS-43</scope>
</reference>
<reference key="5">
    <citation type="journal article" date="2024" name="J. Cell Sci.">
        <title>Fission yeast Duc1 links to ER-PM contact sites and influences PM lipid composition and cytokinetic ring anchoring.</title>
        <authorList>
            <person name="Willet A.H."/>
            <person name="Park J.S."/>
            <person name="Snider C.E."/>
            <person name="Huang J.J."/>
            <person name="Chen J.S."/>
            <person name="Gould K.L."/>
        </authorList>
    </citation>
    <scope>SUBCELLULAR LOCATION</scope>
</reference>
<proteinExistence type="evidence at protein level"/>
<dbReference type="EMBL" id="CU329672">
    <property type="protein sequence ID" value="CAC39321.2"/>
    <property type="molecule type" value="Genomic_DNA"/>
</dbReference>
<dbReference type="RefSeq" id="NP_588026.2">
    <property type="nucleotide sequence ID" value="NM_001023017.2"/>
</dbReference>
<dbReference type="SMR" id="Q96WV2"/>
<dbReference type="BioGRID" id="275547">
    <property type="interactions" value="45"/>
</dbReference>
<dbReference type="STRING" id="284812.Q96WV2"/>
<dbReference type="iPTMnet" id="Q96WV2"/>
<dbReference type="SwissPalm" id="Q96WV2"/>
<dbReference type="PaxDb" id="4896-SPCPB16A4.02c.1"/>
<dbReference type="EnsemblFungi" id="SPCPB16A4.02c.1">
    <property type="protein sequence ID" value="SPCPB16A4.02c.1:pep"/>
    <property type="gene ID" value="SPCPB16A4.02c"/>
</dbReference>
<dbReference type="GeneID" id="2538973"/>
<dbReference type="KEGG" id="spo:2538973"/>
<dbReference type="PomBase" id="SPCPB16A4.02c"/>
<dbReference type="VEuPathDB" id="FungiDB:SPCPB16A4.02c"/>
<dbReference type="eggNOG" id="ENOG502QPZK">
    <property type="taxonomic scope" value="Eukaryota"/>
</dbReference>
<dbReference type="HOGENOM" id="CLU_826816_0_0_1"/>
<dbReference type="InParanoid" id="Q96WV2"/>
<dbReference type="OMA" id="GQFSYYK"/>
<dbReference type="Reactome" id="R-SPO-983695">
    <property type="pathway name" value="Antigen activates B Cell Receptor (BCR) leading to generation of second messengers"/>
</dbReference>
<dbReference type="PRO" id="PR:Q96WV2"/>
<dbReference type="Proteomes" id="UP000002485">
    <property type="component" value="Chromosome III"/>
</dbReference>
<dbReference type="GO" id="GO:0005938">
    <property type="term" value="C:cell cortex"/>
    <property type="evidence" value="ECO:0000314"/>
    <property type="project" value="PomBase"/>
</dbReference>
<dbReference type="GO" id="GO:0032153">
    <property type="term" value="C:cell division site"/>
    <property type="evidence" value="ECO:0007005"/>
    <property type="project" value="PomBase"/>
</dbReference>
<dbReference type="GO" id="GO:0051286">
    <property type="term" value="C:cell tip"/>
    <property type="evidence" value="ECO:0007005"/>
    <property type="project" value="PomBase"/>
</dbReference>
<dbReference type="GO" id="GO:0005886">
    <property type="term" value="C:plasma membrane"/>
    <property type="evidence" value="ECO:0000269"/>
    <property type="project" value="PomBase"/>
</dbReference>
<dbReference type="GO" id="GO:0043325">
    <property type="term" value="F:phosphatidylinositol-3,4-bisphosphate binding"/>
    <property type="evidence" value="ECO:0000318"/>
    <property type="project" value="GO_Central"/>
</dbReference>
<dbReference type="GO" id="GO:0005546">
    <property type="term" value="F:phosphatidylinositol-4,5-bisphosphate binding"/>
    <property type="evidence" value="ECO:0000314"/>
    <property type="project" value="PomBase"/>
</dbReference>
<dbReference type="GO" id="GO:0140550">
    <property type="term" value="F:phosphatidylinositol-4,5-bisphosphate sensor activity"/>
    <property type="evidence" value="ECO:0000269"/>
    <property type="project" value="PomBase"/>
</dbReference>
<dbReference type="GO" id="GO:0005543">
    <property type="term" value="F:phospholipid binding"/>
    <property type="evidence" value="ECO:0000314"/>
    <property type="project" value="PomBase"/>
</dbReference>
<dbReference type="GO" id="GO:0000281">
    <property type="term" value="P:mitotic cytokinesis"/>
    <property type="evidence" value="ECO:0000315"/>
    <property type="project" value="PomBase"/>
</dbReference>
<dbReference type="CDD" id="cd13298">
    <property type="entry name" value="PH1_PH_fungal"/>
    <property type="match status" value="1"/>
</dbReference>
<dbReference type="CDD" id="cd13299">
    <property type="entry name" value="PH2_PH_fungal"/>
    <property type="match status" value="1"/>
</dbReference>
<dbReference type="Gene3D" id="2.30.29.30">
    <property type="entry name" value="Pleckstrin-homology domain (PH domain)/Phosphotyrosine-binding domain (PTB)"/>
    <property type="match status" value="2"/>
</dbReference>
<dbReference type="InterPro" id="IPR011993">
    <property type="entry name" value="PH-like_dom_sf"/>
</dbReference>
<dbReference type="InterPro" id="IPR001849">
    <property type="entry name" value="PH_domain"/>
</dbReference>
<dbReference type="InterPro" id="IPR051707">
    <property type="entry name" value="PI-Interact_SigTrans_Reg"/>
</dbReference>
<dbReference type="PANTHER" id="PTHR14336:SF15">
    <property type="entry name" value="DUAL ADAPTER FOR PHOSPHOTYROSINE AND 3-PHOSPHOTYROSINE AND 3-PHOSPHOINOSITIDE"/>
    <property type="match status" value="1"/>
</dbReference>
<dbReference type="PANTHER" id="PTHR14336">
    <property type="entry name" value="TANDEM PH DOMAIN CONTAINING PROTEIN"/>
    <property type="match status" value="1"/>
</dbReference>
<dbReference type="Pfam" id="PF00169">
    <property type="entry name" value="PH"/>
    <property type="match status" value="2"/>
</dbReference>
<dbReference type="SMART" id="SM00233">
    <property type="entry name" value="PH"/>
    <property type="match status" value="2"/>
</dbReference>
<dbReference type="SUPFAM" id="SSF50729">
    <property type="entry name" value="PH domain-like"/>
    <property type="match status" value="2"/>
</dbReference>
<dbReference type="PROSITE" id="PS50003">
    <property type="entry name" value="PH_DOMAIN"/>
    <property type="match status" value="2"/>
</dbReference>
<keyword id="KW-1003">Cell membrane</keyword>
<keyword id="KW-0472">Membrane</keyword>
<keyword id="KW-1185">Reference proteome</keyword>
<keyword id="KW-0677">Repeat</keyword>
<sequence length="339" mass="39031">MDPGVSSHLRTASLDEARRLPELERVLKSGWLIKKGHATSTKKQLWAVLRRDQLSFYKDEKEYKTKFIFPTQDISAVAYYKEKSPKTFFLYLNEKIIRLIATSNEDAEEWVHVLRSTTGYRAPFSRHPISYILANSSSRTESEPNVQISDTDFDNISTEPRNQTTSPLDLETGQGDHFCTSLYDLIQFGKLRPPGINEENANYPFNPQEVNTLNKHRHSASLQNLYKLLDENKVLMQGTIHWLHGNLHRWSKCWAVVRGYGMTIYNTNREYKPVKVIPIADIQDVAEINVPESSHKYFFTVITQNKPIEFRVDNEDSLILWVAALKTSIDKANGTFTAC</sequence>
<accession>Q96WV2</accession>
<feature type="chain" id="PRO_0000310808" description="Pleckstrin homology domain protein opy1">
    <location>
        <begin position="1"/>
        <end position="339"/>
    </location>
</feature>
<feature type="domain" description="PH 1" evidence="1">
    <location>
        <begin position="25"/>
        <end position="119"/>
    </location>
</feature>
<feature type="domain" description="PH 2" evidence="1">
    <location>
        <begin position="233"/>
        <end position="330"/>
    </location>
</feature>
<feature type="region of interest" description="Disordered" evidence="2">
    <location>
        <begin position="141"/>
        <end position="170"/>
    </location>
</feature>
<feature type="compositionally biased region" description="Polar residues" evidence="2">
    <location>
        <begin position="141"/>
        <end position="167"/>
    </location>
</feature>
<feature type="mutagenesis site" description="Abolishes localization of opy1 to the cell periphery and cell division site." evidence="4">
    <original>KKGHATSTKK</original>
    <variation>NNGHATSTNN</variation>
    <location>
        <begin position="34"/>
        <end position="43"/>
    </location>
</feature>
<name>OPY1_SCHPO</name>
<gene>
    <name evidence="6" type="primary">opy1</name>
    <name type="ORF">SPCPB16A4.02c</name>
</gene>
<evidence type="ECO:0000255" key="1">
    <source>
        <dbReference type="PROSITE-ProRule" id="PRU00145"/>
    </source>
</evidence>
<evidence type="ECO:0000256" key="2">
    <source>
        <dbReference type="SAM" id="MobiDB-lite"/>
    </source>
</evidence>
<evidence type="ECO:0000269" key="3">
    <source>
    </source>
</evidence>
<evidence type="ECO:0000269" key="4">
    <source>
    </source>
</evidence>
<evidence type="ECO:0000269" key="5">
    <source>
    </source>
</evidence>
<evidence type="ECO:0000312" key="6">
    <source>
        <dbReference type="PomBase" id="SPCPB16A4.02c"/>
    </source>
</evidence>
<protein>
    <recommendedName>
        <fullName evidence="6">Pleckstrin homology domain protein opy1</fullName>
    </recommendedName>
</protein>
<organism>
    <name type="scientific">Schizosaccharomyces pombe (strain 972 / ATCC 24843)</name>
    <name type="common">Fission yeast</name>
    <dbReference type="NCBI Taxonomy" id="284812"/>
    <lineage>
        <taxon>Eukaryota</taxon>
        <taxon>Fungi</taxon>
        <taxon>Dikarya</taxon>
        <taxon>Ascomycota</taxon>
        <taxon>Taphrinomycotina</taxon>
        <taxon>Schizosaccharomycetes</taxon>
        <taxon>Schizosaccharomycetales</taxon>
        <taxon>Schizosaccharomycetaceae</taxon>
        <taxon>Schizosaccharomyces</taxon>
    </lineage>
</organism>
<comment type="function">
    <text evidence="4">Binds phosphatidylinositol 4,5-bisphosphate (PtdIns(4,5)P2/PIP2) at the cell membrane.</text>
</comment>
<comment type="subunit">
    <text evidence="4">Interacts (via domain PH 1) with phosphatidylinositol 4-phosphate 5-kinase its3; the interaction is direct but opy1 does not appear to regulate its3 localization or function.</text>
</comment>
<comment type="subcellular location">
    <subcellularLocation>
        <location evidence="3">Cell tip</location>
    </subcellularLocation>
    <subcellularLocation>
        <location evidence="4 5">Cell membrane</location>
        <topology evidence="4">Peripheral membrane protein</topology>
    </subcellularLocation>
    <text evidence="4 5">Also localizes to the cell division site.</text>
</comment>
<comment type="domain">
    <text evidence="4">The PH 1 domain interacts with membranes containing phosphatidylinositol 4,5-bisphosphate (PtdIns(4,5)P2/PIP2).</text>
</comment>
<comment type="disruption phenotype">
    <text evidence="4">Leads to off-center septation (PubMed:33172987). Does not affect its3 localization to the cell membrane (PubMed:33172987).</text>
</comment>